<gene>
    <name type="primary">UMK2</name>
    <name type="ordered locus">At4g25280</name>
    <name type="ORF">F24A6.120</name>
</gene>
<keyword id="KW-0067">ATP-binding</keyword>
<keyword id="KW-0963">Cytoplasm</keyword>
<keyword id="KW-0418">Kinase</keyword>
<keyword id="KW-0547">Nucleotide-binding</keyword>
<keyword id="KW-0539">Nucleus</keyword>
<keyword id="KW-0665">Pyrimidine biosynthesis</keyword>
<keyword id="KW-1185">Reference proteome</keyword>
<keyword id="KW-0808">Transferase</keyword>
<dbReference type="EC" id="2.7.4.14" evidence="1"/>
<dbReference type="EMBL" id="AL035396">
    <property type="protein sequence ID" value="CAA23069.1"/>
    <property type="status" value="ALT_SEQ"/>
    <property type="molecule type" value="Genomic_DNA"/>
</dbReference>
<dbReference type="EMBL" id="AL161563">
    <property type="protein sequence ID" value="CAB81339.1"/>
    <property type="status" value="ALT_SEQ"/>
    <property type="molecule type" value="Genomic_DNA"/>
</dbReference>
<dbReference type="EMBL" id="CP002687">
    <property type="protein sequence ID" value="AEE85034.2"/>
    <property type="molecule type" value="Genomic_DNA"/>
</dbReference>
<dbReference type="EMBL" id="CP002687">
    <property type="protein sequence ID" value="ANM66837.1"/>
    <property type="molecule type" value="Genomic_DNA"/>
</dbReference>
<dbReference type="EMBL" id="BT010930">
    <property type="protein sequence ID" value="AAR24708.1"/>
    <property type="status" value="ALT_INIT"/>
    <property type="molecule type" value="mRNA"/>
</dbReference>
<dbReference type="EMBL" id="BT011652">
    <property type="protein sequence ID" value="AAS47658.1"/>
    <property type="molecule type" value="mRNA"/>
</dbReference>
<dbReference type="PIR" id="T05549">
    <property type="entry name" value="T05549"/>
</dbReference>
<dbReference type="RefSeq" id="NP_001320061.1">
    <property type="nucleotide sequence ID" value="NM_001341726.1"/>
</dbReference>
<dbReference type="RefSeq" id="NP_194258.3">
    <property type="nucleotide sequence ID" value="NM_118660.3"/>
</dbReference>
<dbReference type="SMR" id="Q6NMK6"/>
<dbReference type="FunCoup" id="Q6NMK6">
    <property type="interactions" value="2833"/>
</dbReference>
<dbReference type="STRING" id="3702.Q6NMK6"/>
<dbReference type="PaxDb" id="3702-AT4G25280.1"/>
<dbReference type="ProteomicsDB" id="247154"/>
<dbReference type="EnsemblPlants" id="AT4G25280.1">
    <property type="protein sequence ID" value="AT4G25280.1"/>
    <property type="gene ID" value="AT4G25280"/>
</dbReference>
<dbReference type="EnsemblPlants" id="AT4G25280.2">
    <property type="protein sequence ID" value="AT4G25280.2"/>
    <property type="gene ID" value="AT4G25280"/>
</dbReference>
<dbReference type="GeneID" id="828631"/>
<dbReference type="Gramene" id="AT4G25280.1">
    <property type="protein sequence ID" value="AT4G25280.1"/>
    <property type="gene ID" value="AT4G25280"/>
</dbReference>
<dbReference type="Gramene" id="AT4G25280.2">
    <property type="protein sequence ID" value="AT4G25280.2"/>
    <property type="gene ID" value="AT4G25280"/>
</dbReference>
<dbReference type="KEGG" id="ath:AT4G25280"/>
<dbReference type="Araport" id="AT4G25280"/>
<dbReference type="TAIR" id="AT4G25280"/>
<dbReference type="eggNOG" id="KOG3079">
    <property type="taxonomic scope" value="Eukaryota"/>
</dbReference>
<dbReference type="HOGENOM" id="CLU_032354_0_1_1"/>
<dbReference type="InParanoid" id="Q6NMK6"/>
<dbReference type="OMA" id="GTQCDRM"/>
<dbReference type="PhylomeDB" id="Q6NMK6"/>
<dbReference type="BioCyc" id="ARA:AT4G25280-MONOMER"/>
<dbReference type="PRO" id="PR:Q6NMK6"/>
<dbReference type="Proteomes" id="UP000006548">
    <property type="component" value="Chromosome 4"/>
</dbReference>
<dbReference type="ExpressionAtlas" id="Q6NMK6">
    <property type="expression patterns" value="baseline and differential"/>
</dbReference>
<dbReference type="GO" id="GO:0005829">
    <property type="term" value="C:cytosol"/>
    <property type="evidence" value="ECO:0007005"/>
    <property type="project" value="TAIR"/>
</dbReference>
<dbReference type="GO" id="GO:0005634">
    <property type="term" value="C:nucleus"/>
    <property type="evidence" value="ECO:0007669"/>
    <property type="project" value="UniProtKB-SubCell"/>
</dbReference>
<dbReference type="GO" id="GO:0005524">
    <property type="term" value="F:ATP binding"/>
    <property type="evidence" value="ECO:0007669"/>
    <property type="project" value="UniProtKB-KW"/>
</dbReference>
<dbReference type="GO" id="GO:0036430">
    <property type="term" value="F:CMP kinase activity"/>
    <property type="evidence" value="ECO:0007669"/>
    <property type="project" value="RHEA"/>
</dbReference>
<dbReference type="GO" id="GO:0036431">
    <property type="term" value="F:dCMP kinase activity"/>
    <property type="evidence" value="ECO:0007669"/>
    <property type="project" value="RHEA"/>
</dbReference>
<dbReference type="GO" id="GO:0033862">
    <property type="term" value="F:UMP kinase activity"/>
    <property type="evidence" value="ECO:0007669"/>
    <property type="project" value="RHEA"/>
</dbReference>
<dbReference type="GO" id="GO:0006207">
    <property type="term" value="P:'de novo' pyrimidine nucleobase biosynthetic process"/>
    <property type="evidence" value="ECO:0007669"/>
    <property type="project" value="InterPro"/>
</dbReference>
<dbReference type="GO" id="GO:0006221">
    <property type="term" value="P:pyrimidine nucleotide biosynthetic process"/>
    <property type="evidence" value="ECO:0007669"/>
    <property type="project" value="UniProtKB-UniRule"/>
</dbReference>
<dbReference type="CDD" id="cd01428">
    <property type="entry name" value="ADK"/>
    <property type="match status" value="1"/>
</dbReference>
<dbReference type="Gene3D" id="3.40.50.300">
    <property type="entry name" value="P-loop containing nucleotide triphosphate hydrolases"/>
    <property type="match status" value="1"/>
</dbReference>
<dbReference type="HAMAP" id="MF_00235">
    <property type="entry name" value="Adenylate_kinase_Adk"/>
    <property type="match status" value="1"/>
</dbReference>
<dbReference type="HAMAP" id="MF_03172">
    <property type="entry name" value="Adenylate_kinase_UMP_CMP_kin"/>
    <property type="match status" value="1"/>
</dbReference>
<dbReference type="InterPro" id="IPR000850">
    <property type="entry name" value="Adenylat/UMP-CMP_kin"/>
</dbReference>
<dbReference type="InterPro" id="IPR033690">
    <property type="entry name" value="Adenylat_kinase_CS"/>
</dbReference>
<dbReference type="InterPro" id="IPR027417">
    <property type="entry name" value="P-loop_NTPase"/>
</dbReference>
<dbReference type="InterPro" id="IPR006266">
    <property type="entry name" value="UMP_CMP_kinase"/>
</dbReference>
<dbReference type="NCBIfam" id="TIGR01359">
    <property type="entry name" value="UMP_CMP_kin_fam"/>
    <property type="match status" value="1"/>
</dbReference>
<dbReference type="PANTHER" id="PTHR23359">
    <property type="entry name" value="NUCLEOTIDE KINASE"/>
    <property type="match status" value="1"/>
</dbReference>
<dbReference type="Pfam" id="PF00406">
    <property type="entry name" value="ADK"/>
    <property type="match status" value="1"/>
</dbReference>
<dbReference type="PRINTS" id="PR00094">
    <property type="entry name" value="ADENYLTKNASE"/>
</dbReference>
<dbReference type="SUPFAM" id="SSF52540">
    <property type="entry name" value="P-loop containing nucleoside triphosphate hydrolases"/>
    <property type="match status" value="1"/>
</dbReference>
<dbReference type="PROSITE" id="PS00113">
    <property type="entry name" value="ADENYLATE_KINASE"/>
    <property type="match status" value="1"/>
</dbReference>
<evidence type="ECO:0000255" key="1">
    <source>
        <dbReference type="HAMAP-Rule" id="MF_03172"/>
    </source>
</evidence>
<evidence type="ECO:0000305" key="2"/>
<accession>Q6NMK6</accession>
<accession>A0A1P8B5G4</accession>
<accession>Q9SB35</accession>
<proteinExistence type="evidence at transcript level"/>
<feature type="chain" id="PRO_0000425984" description="Probable UMP-CMP kinase 2">
    <location>
        <begin position="1"/>
        <end position="259"/>
    </location>
</feature>
<feature type="region of interest" description="NMP" evidence="1">
    <location>
        <begin position="83"/>
        <end position="112"/>
    </location>
</feature>
<feature type="region of interest" description="LID" evidence="1">
    <location>
        <begin position="175"/>
        <end position="183"/>
    </location>
</feature>
<feature type="binding site" evidence="1">
    <location>
        <begin position="63"/>
        <end position="68"/>
    </location>
    <ligand>
        <name>ATP</name>
        <dbReference type="ChEBI" id="CHEBI:30616"/>
    </ligand>
</feature>
<feature type="binding site" evidence="1">
    <location>
        <position position="89"/>
    </location>
    <ligand>
        <name>a ribonucleoside 5'-phosphate</name>
        <dbReference type="ChEBI" id="CHEBI:58043"/>
    </ligand>
</feature>
<feature type="binding site" evidence="1">
    <location>
        <begin position="110"/>
        <end position="112"/>
    </location>
    <ligand>
        <name>a ribonucleoside 5'-phosphate</name>
        <dbReference type="ChEBI" id="CHEBI:58043"/>
    </ligand>
</feature>
<feature type="binding site" evidence="1">
    <location>
        <begin position="137"/>
        <end position="140"/>
    </location>
    <ligand>
        <name>a ribonucleoside 5'-phosphate</name>
        <dbReference type="ChEBI" id="CHEBI:58043"/>
    </ligand>
</feature>
<feature type="binding site" evidence="1">
    <location>
        <position position="144"/>
    </location>
    <ligand>
        <name>CMP</name>
        <dbReference type="ChEBI" id="CHEBI:60377"/>
    </ligand>
</feature>
<feature type="binding site" evidence="1">
    <location>
        <position position="176"/>
    </location>
    <ligand>
        <name>ATP</name>
        <dbReference type="ChEBI" id="CHEBI:30616"/>
    </ligand>
</feature>
<feature type="binding site" evidence="1">
    <location>
        <position position="180"/>
    </location>
    <ligand>
        <name>a ribonucleoside 5'-phosphate</name>
        <dbReference type="ChEBI" id="CHEBI:58043"/>
    </ligand>
</feature>
<feature type="binding site" evidence="1">
    <location>
        <position position="191"/>
    </location>
    <ligand>
        <name>a ribonucleoside 5'-phosphate</name>
        <dbReference type="ChEBI" id="CHEBI:58043"/>
    </ligand>
</feature>
<feature type="binding site" evidence="1">
    <location>
        <position position="219"/>
    </location>
    <ligand>
        <name>ATP</name>
        <dbReference type="ChEBI" id="CHEBI:30616"/>
    </ligand>
</feature>
<name>KCY2_ARATH</name>
<protein>
    <recommendedName>
        <fullName>Probable UMP-CMP kinase 2</fullName>
        <ecNumber evidence="1">2.7.4.14</ecNumber>
    </recommendedName>
    <alternativeName>
        <fullName evidence="1">Deoxycytidylate kinase</fullName>
        <shortName evidence="1">CK</shortName>
        <shortName evidence="1">dCMP kinase</shortName>
    </alternativeName>
    <alternativeName>
        <fullName evidence="1">Uridine monophosphate/cytidine monophosphate kinase</fullName>
        <shortName evidence="1">UMP/CMP kinase</shortName>
        <shortName evidence="1">UMP/CMPK</shortName>
    </alternativeName>
</protein>
<comment type="function">
    <text evidence="1">Catalyzes the phosphorylation of pyrimidine nucleoside monophosphates at the expense of ATP. Plays an important role in de novo pyrimidine nucleotide biosynthesis. Has preference for UMP and CMP as phosphate acceptors.</text>
</comment>
<comment type="catalytic activity">
    <reaction evidence="1">
        <text>CMP + ATP = CDP + ADP</text>
        <dbReference type="Rhea" id="RHEA:11600"/>
        <dbReference type="ChEBI" id="CHEBI:30616"/>
        <dbReference type="ChEBI" id="CHEBI:58069"/>
        <dbReference type="ChEBI" id="CHEBI:60377"/>
        <dbReference type="ChEBI" id="CHEBI:456216"/>
        <dbReference type="EC" id="2.7.4.14"/>
    </reaction>
</comment>
<comment type="catalytic activity">
    <reaction evidence="1">
        <text>dCMP + ATP = dCDP + ADP</text>
        <dbReference type="Rhea" id="RHEA:25094"/>
        <dbReference type="ChEBI" id="CHEBI:30616"/>
        <dbReference type="ChEBI" id="CHEBI:57566"/>
        <dbReference type="ChEBI" id="CHEBI:58593"/>
        <dbReference type="ChEBI" id="CHEBI:456216"/>
        <dbReference type="EC" id="2.7.4.14"/>
    </reaction>
</comment>
<comment type="catalytic activity">
    <reaction evidence="1">
        <text>UMP + ATP = UDP + ADP</text>
        <dbReference type="Rhea" id="RHEA:24400"/>
        <dbReference type="ChEBI" id="CHEBI:30616"/>
        <dbReference type="ChEBI" id="CHEBI:57865"/>
        <dbReference type="ChEBI" id="CHEBI:58223"/>
        <dbReference type="ChEBI" id="CHEBI:456216"/>
        <dbReference type="EC" id="2.7.4.14"/>
    </reaction>
</comment>
<comment type="cofactor">
    <cofactor evidence="1">
        <name>Mg(2+)</name>
        <dbReference type="ChEBI" id="CHEBI:18420"/>
    </cofactor>
    <text evidence="1">Binds 1 Mg(2+) ion per monomer.</text>
</comment>
<comment type="subunit">
    <text evidence="1">Monomer.</text>
</comment>
<comment type="subcellular location">
    <subcellularLocation>
        <location evidence="1">Cytoplasm</location>
    </subcellularLocation>
    <subcellularLocation>
        <location evidence="1">Nucleus</location>
    </subcellularLocation>
</comment>
<comment type="domain">
    <text evidence="1">Consists of three domains, a large central CORE domain and two small peripheral domains, NMPbind and LID, which undergo movements during catalysis. The LID domain closes over the site of phosphoryl transfer upon ATP binding. Assembling and dissambling the active center during each catalytic cycle provides an effective means to prevent ATP hydrolysis.</text>
</comment>
<comment type="similarity">
    <text evidence="1">Belongs to the adenylate kinase family. UMP-CMP kinase subfamily.</text>
</comment>
<comment type="sequence caution" evidence="2">
    <conflict type="erroneous initiation">
        <sequence resource="EMBL-CDS" id="AAR24708"/>
    </conflict>
    <text>Truncated N-terminus.</text>
</comment>
<comment type="sequence caution" evidence="2">
    <conflict type="erroneous gene model prediction">
        <sequence resource="EMBL-CDS" id="CAA23069"/>
    </conflict>
</comment>
<comment type="sequence caution" evidence="2">
    <conflict type="erroneous gene model prediction">
        <sequence resource="EMBL-CDS" id="CAB81339"/>
    </conflict>
</comment>
<sequence length="259" mass="29045">MWRRVALLSPMISSSSRSLKLSQAASGLKVGESFATDIISQEERVSPPKEKAPFITFVLGGPGSGKGTQCEKIVETFGLQHLSAGDLLRREIAMHTENGAMILNLIKDGKIVPSEVTVKLIQKELESSDNRKFLIDGFPRTEENRVAFERIIRADPDVVLFFDCPEEEMVKRVLNRNQGRIDDNITTMKKRLKIFNALNRPVIDYYKNKGKLYTINAVGTVDDIFQHVLPIFNSFEQLKESSHVNPQSHLGSSLVENSS</sequence>
<reference key="1">
    <citation type="journal article" date="1999" name="Nature">
        <title>Sequence and analysis of chromosome 4 of the plant Arabidopsis thaliana.</title>
        <authorList>
            <person name="Mayer K.F.X."/>
            <person name="Schueller C."/>
            <person name="Wambutt R."/>
            <person name="Murphy G."/>
            <person name="Volckaert G."/>
            <person name="Pohl T."/>
            <person name="Duesterhoeft A."/>
            <person name="Stiekema W."/>
            <person name="Entian K.-D."/>
            <person name="Terryn N."/>
            <person name="Harris B."/>
            <person name="Ansorge W."/>
            <person name="Brandt P."/>
            <person name="Grivell L.A."/>
            <person name="Rieger M."/>
            <person name="Weichselgartner M."/>
            <person name="de Simone V."/>
            <person name="Obermaier B."/>
            <person name="Mache R."/>
            <person name="Mueller M."/>
            <person name="Kreis M."/>
            <person name="Delseny M."/>
            <person name="Puigdomenech P."/>
            <person name="Watson M."/>
            <person name="Schmidtheini T."/>
            <person name="Reichert B."/>
            <person name="Portetelle D."/>
            <person name="Perez-Alonso M."/>
            <person name="Boutry M."/>
            <person name="Bancroft I."/>
            <person name="Vos P."/>
            <person name="Hoheisel J."/>
            <person name="Zimmermann W."/>
            <person name="Wedler H."/>
            <person name="Ridley P."/>
            <person name="Langham S.-A."/>
            <person name="McCullagh B."/>
            <person name="Bilham L."/>
            <person name="Robben J."/>
            <person name="van der Schueren J."/>
            <person name="Grymonprez B."/>
            <person name="Chuang Y.-J."/>
            <person name="Vandenbussche F."/>
            <person name="Braeken M."/>
            <person name="Weltjens I."/>
            <person name="Voet M."/>
            <person name="Bastiaens I."/>
            <person name="Aert R."/>
            <person name="Defoor E."/>
            <person name="Weitzenegger T."/>
            <person name="Bothe G."/>
            <person name="Ramsperger U."/>
            <person name="Hilbert H."/>
            <person name="Braun M."/>
            <person name="Holzer E."/>
            <person name="Brandt A."/>
            <person name="Peters S."/>
            <person name="van Staveren M."/>
            <person name="Dirkse W."/>
            <person name="Mooijman P."/>
            <person name="Klein Lankhorst R."/>
            <person name="Rose M."/>
            <person name="Hauf J."/>
            <person name="Koetter P."/>
            <person name="Berneiser S."/>
            <person name="Hempel S."/>
            <person name="Feldpausch M."/>
            <person name="Lamberth S."/>
            <person name="Van den Daele H."/>
            <person name="De Keyser A."/>
            <person name="Buysshaert C."/>
            <person name="Gielen J."/>
            <person name="Villarroel R."/>
            <person name="De Clercq R."/>
            <person name="van Montagu M."/>
            <person name="Rogers J."/>
            <person name="Cronin A."/>
            <person name="Quail M.A."/>
            <person name="Bray-Allen S."/>
            <person name="Clark L."/>
            <person name="Doggett J."/>
            <person name="Hall S."/>
            <person name="Kay M."/>
            <person name="Lennard N."/>
            <person name="McLay K."/>
            <person name="Mayes R."/>
            <person name="Pettett A."/>
            <person name="Rajandream M.A."/>
            <person name="Lyne M."/>
            <person name="Benes V."/>
            <person name="Rechmann S."/>
            <person name="Borkova D."/>
            <person name="Bloecker H."/>
            <person name="Scharfe M."/>
            <person name="Grimm M."/>
            <person name="Loehnert T.-H."/>
            <person name="Dose S."/>
            <person name="de Haan M."/>
            <person name="Maarse A.C."/>
            <person name="Schaefer M."/>
            <person name="Mueller-Auer S."/>
            <person name="Gabel C."/>
            <person name="Fuchs M."/>
            <person name="Fartmann B."/>
            <person name="Granderath K."/>
            <person name="Dauner D."/>
            <person name="Herzl A."/>
            <person name="Neumann S."/>
            <person name="Argiriou A."/>
            <person name="Vitale D."/>
            <person name="Liguori R."/>
            <person name="Piravandi E."/>
            <person name="Massenet O."/>
            <person name="Quigley F."/>
            <person name="Clabauld G."/>
            <person name="Muendlein A."/>
            <person name="Felber R."/>
            <person name="Schnabl S."/>
            <person name="Hiller R."/>
            <person name="Schmidt W."/>
            <person name="Lecharny A."/>
            <person name="Aubourg S."/>
            <person name="Chefdor F."/>
            <person name="Cooke R."/>
            <person name="Berger C."/>
            <person name="Monfort A."/>
            <person name="Casacuberta E."/>
            <person name="Gibbons T."/>
            <person name="Weber N."/>
            <person name="Vandenbol M."/>
            <person name="Bargues M."/>
            <person name="Terol J."/>
            <person name="Torres A."/>
            <person name="Perez-Perez A."/>
            <person name="Purnelle B."/>
            <person name="Bent E."/>
            <person name="Johnson S."/>
            <person name="Tacon D."/>
            <person name="Jesse T."/>
            <person name="Heijnen L."/>
            <person name="Schwarz S."/>
            <person name="Scholler P."/>
            <person name="Heber S."/>
            <person name="Francs P."/>
            <person name="Bielke C."/>
            <person name="Frishman D."/>
            <person name="Haase D."/>
            <person name="Lemcke K."/>
            <person name="Mewes H.-W."/>
            <person name="Stocker S."/>
            <person name="Zaccaria P."/>
            <person name="Bevan M."/>
            <person name="Wilson R.K."/>
            <person name="de la Bastide M."/>
            <person name="Habermann K."/>
            <person name="Parnell L."/>
            <person name="Dedhia N."/>
            <person name="Gnoj L."/>
            <person name="Schutz K."/>
            <person name="Huang E."/>
            <person name="Spiegel L."/>
            <person name="Sekhon M."/>
            <person name="Murray J."/>
            <person name="Sheet P."/>
            <person name="Cordes M."/>
            <person name="Abu-Threideh J."/>
            <person name="Stoneking T."/>
            <person name="Kalicki J."/>
            <person name="Graves T."/>
            <person name="Harmon G."/>
            <person name="Edwards J."/>
            <person name="Latreille P."/>
            <person name="Courtney L."/>
            <person name="Cloud J."/>
            <person name="Abbott A."/>
            <person name="Scott K."/>
            <person name="Johnson D."/>
            <person name="Minx P."/>
            <person name="Bentley D."/>
            <person name="Fulton B."/>
            <person name="Miller N."/>
            <person name="Greco T."/>
            <person name="Kemp K."/>
            <person name="Kramer J."/>
            <person name="Fulton L."/>
            <person name="Mardis E."/>
            <person name="Dante M."/>
            <person name="Pepin K."/>
            <person name="Hillier L.W."/>
            <person name="Nelson J."/>
            <person name="Spieth J."/>
            <person name="Ryan E."/>
            <person name="Andrews S."/>
            <person name="Geisel C."/>
            <person name="Layman D."/>
            <person name="Du H."/>
            <person name="Ali J."/>
            <person name="Berghoff A."/>
            <person name="Jones K."/>
            <person name="Drone K."/>
            <person name="Cotton M."/>
            <person name="Joshu C."/>
            <person name="Antonoiu B."/>
            <person name="Zidanic M."/>
            <person name="Strong C."/>
            <person name="Sun H."/>
            <person name="Lamar B."/>
            <person name="Yordan C."/>
            <person name="Ma P."/>
            <person name="Zhong J."/>
            <person name="Preston R."/>
            <person name="Vil D."/>
            <person name="Shekher M."/>
            <person name="Matero A."/>
            <person name="Shah R."/>
            <person name="Swaby I.K."/>
            <person name="O'Shaughnessy A."/>
            <person name="Rodriguez M."/>
            <person name="Hoffman J."/>
            <person name="Till S."/>
            <person name="Granat S."/>
            <person name="Shohdy N."/>
            <person name="Hasegawa A."/>
            <person name="Hameed A."/>
            <person name="Lodhi M."/>
            <person name="Johnson A."/>
            <person name="Chen E."/>
            <person name="Marra M.A."/>
            <person name="Martienssen R."/>
            <person name="McCombie W.R."/>
        </authorList>
    </citation>
    <scope>NUCLEOTIDE SEQUENCE [LARGE SCALE GENOMIC DNA]</scope>
    <source>
        <strain>cv. Columbia</strain>
    </source>
</reference>
<reference key="2">
    <citation type="journal article" date="2017" name="Plant J.">
        <title>Araport11: a complete reannotation of the Arabidopsis thaliana reference genome.</title>
        <authorList>
            <person name="Cheng C.Y."/>
            <person name="Krishnakumar V."/>
            <person name="Chan A.P."/>
            <person name="Thibaud-Nissen F."/>
            <person name="Schobel S."/>
            <person name="Town C.D."/>
        </authorList>
    </citation>
    <scope>GENOME REANNOTATION</scope>
    <source>
        <strain>cv. Columbia</strain>
    </source>
</reference>
<reference key="3">
    <citation type="submission" date="2004-02" db="EMBL/GenBank/DDBJ databases">
        <title>Arabidopsis ORF clones.</title>
        <authorList>
            <person name="Kim C.J."/>
            <person name="Chen H."/>
            <person name="Cheuk R.F."/>
            <person name="Shinn P."/>
            <person name="Ecker J.R."/>
        </authorList>
    </citation>
    <scope>NUCLEOTIDE SEQUENCE [LARGE SCALE MRNA] OF 4-259</scope>
    <source>
        <strain>cv. Columbia</strain>
    </source>
</reference>
<organism>
    <name type="scientific">Arabidopsis thaliana</name>
    <name type="common">Mouse-ear cress</name>
    <dbReference type="NCBI Taxonomy" id="3702"/>
    <lineage>
        <taxon>Eukaryota</taxon>
        <taxon>Viridiplantae</taxon>
        <taxon>Streptophyta</taxon>
        <taxon>Embryophyta</taxon>
        <taxon>Tracheophyta</taxon>
        <taxon>Spermatophyta</taxon>
        <taxon>Magnoliopsida</taxon>
        <taxon>eudicotyledons</taxon>
        <taxon>Gunneridae</taxon>
        <taxon>Pentapetalae</taxon>
        <taxon>rosids</taxon>
        <taxon>malvids</taxon>
        <taxon>Brassicales</taxon>
        <taxon>Brassicaceae</taxon>
        <taxon>Camelineae</taxon>
        <taxon>Arabidopsis</taxon>
    </lineage>
</organism>